<feature type="chain" id="PRO_0000374791" description="Ribosomal protein uS12 methylthiotransferase RimO">
    <location>
        <begin position="1"/>
        <end position="453"/>
    </location>
</feature>
<feature type="domain" description="MTTase N-terminal" evidence="1">
    <location>
        <begin position="3"/>
        <end position="118"/>
    </location>
</feature>
<feature type="domain" description="Radical SAM core" evidence="2">
    <location>
        <begin position="148"/>
        <end position="378"/>
    </location>
</feature>
<feature type="domain" description="TRAM" evidence="1">
    <location>
        <begin position="381"/>
        <end position="449"/>
    </location>
</feature>
<feature type="binding site" evidence="1">
    <location>
        <position position="12"/>
    </location>
    <ligand>
        <name>[4Fe-4S] cluster</name>
        <dbReference type="ChEBI" id="CHEBI:49883"/>
        <label>1</label>
    </ligand>
</feature>
<feature type="binding site" evidence="1">
    <location>
        <position position="48"/>
    </location>
    <ligand>
        <name>[4Fe-4S] cluster</name>
        <dbReference type="ChEBI" id="CHEBI:49883"/>
        <label>1</label>
    </ligand>
</feature>
<feature type="binding site" evidence="1">
    <location>
        <position position="81"/>
    </location>
    <ligand>
        <name>[4Fe-4S] cluster</name>
        <dbReference type="ChEBI" id="CHEBI:49883"/>
        <label>1</label>
    </ligand>
</feature>
<feature type="binding site" evidence="1">
    <location>
        <position position="162"/>
    </location>
    <ligand>
        <name>[4Fe-4S] cluster</name>
        <dbReference type="ChEBI" id="CHEBI:49883"/>
        <label>2</label>
        <note>4Fe-4S-S-AdoMet</note>
    </ligand>
</feature>
<feature type="binding site" evidence="1">
    <location>
        <position position="166"/>
    </location>
    <ligand>
        <name>[4Fe-4S] cluster</name>
        <dbReference type="ChEBI" id="CHEBI:49883"/>
        <label>2</label>
        <note>4Fe-4S-S-AdoMet</note>
    </ligand>
</feature>
<feature type="binding site" evidence="1">
    <location>
        <position position="169"/>
    </location>
    <ligand>
        <name>[4Fe-4S] cluster</name>
        <dbReference type="ChEBI" id="CHEBI:49883"/>
        <label>2</label>
        <note>4Fe-4S-S-AdoMet</note>
    </ligand>
</feature>
<gene>
    <name evidence="1" type="primary">rimO</name>
    <name type="ordered locus">Cthe_0942</name>
</gene>
<evidence type="ECO:0000255" key="1">
    <source>
        <dbReference type="HAMAP-Rule" id="MF_01865"/>
    </source>
</evidence>
<evidence type="ECO:0000255" key="2">
    <source>
        <dbReference type="PROSITE-ProRule" id="PRU01266"/>
    </source>
</evidence>
<organism>
    <name type="scientific">Acetivibrio thermocellus (strain ATCC 27405 / DSM 1237 / JCM 9322 / NBRC 103400 / NCIMB 10682 / NRRL B-4536 / VPI 7372)</name>
    <name type="common">Clostridium thermocellum</name>
    <dbReference type="NCBI Taxonomy" id="203119"/>
    <lineage>
        <taxon>Bacteria</taxon>
        <taxon>Bacillati</taxon>
        <taxon>Bacillota</taxon>
        <taxon>Clostridia</taxon>
        <taxon>Eubacteriales</taxon>
        <taxon>Oscillospiraceae</taxon>
        <taxon>Acetivibrio</taxon>
    </lineage>
</organism>
<dbReference type="EC" id="2.8.4.4" evidence="1"/>
<dbReference type="EMBL" id="CP000568">
    <property type="protein sequence ID" value="ABN52176.1"/>
    <property type="molecule type" value="Genomic_DNA"/>
</dbReference>
<dbReference type="RefSeq" id="WP_003518616.1">
    <property type="nucleotide sequence ID" value="NC_009012.1"/>
</dbReference>
<dbReference type="SMR" id="A3DDZ7"/>
<dbReference type="STRING" id="203119.Cthe_0942"/>
<dbReference type="GeneID" id="35802860"/>
<dbReference type="KEGG" id="cth:Cthe_0942"/>
<dbReference type="eggNOG" id="COG0621">
    <property type="taxonomic scope" value="Bacteria"/>
</dbReference>
<dbReference type="HOGENOM" id="CLU_018697_0_1_9"/>
<dbReference type="OrthoDB" id="9805215at2"/>
<dbReference type="Proteomes" id="UP000002145">
    <property type="component" value="Chromosome"/>
</dbReference>
<dbReference type="GO" id="GO:0005829">
    <property type="term" value="C:cytosol"/>
    <property type="evidence" value="ECO:0007669"/>
    <property type="project" value="TreeGrafter"/>
</dbReference>
<dbReference type="GO" id="GO:0051539">
    <property type="term" value="F:4 iron, 4 sulfur cluster binding"/>
    <property type="evidence" value="ECO:0007669"/>
    <property type="project" value="UniProtKB-UniRule"/>
</dbReference>
<dbReference type="GO" id="GO:0035599">
    <property type="term" value="F:aspartic acid methylthiotransferase activity"/>
    <property type="evidence" value="ECO:0007669"/>
    <property type="project" value="TreeGrafter"/>
</dbReference>
<dbReference type="GO" id="GO:0046872">
    <property type="term" value="F:metal ion binding"/>
    <property type="evidence" value="ECO:0007669"/>
    <property type="project" value="UniProtKB-KW"/>
</dbReference>
<dbReference type="GO" id="GO:0103039">
    <property type="term" value="F:protein methylthiotransferase activity"/>
    <property type="evidence" value="ECO:0007669"/>
    <property type="project" value="UniProtKB-EC"/>
</dbReference>
<dbReference type="GO" id="GO:0006400">
    <property type="term" value="P:tRNA modification"/>
    <property type="evidence" value="ECO:0007669"/>
    <property type="project" value="InterPro"/>
</dbReference>
<dbReference type="CDD" id="cd01335">
    <property type="entry name" value="Radical_SAM"/>
    <property type="match status" value="1"/>
</dbReference>
<dbReference type="FunFam" id="3.40.50.12160:FF:000002">
    <property type="entry name" value="Ribosomal protein S12 methylthiotransferase RimO"/>
    <property type="match status" value="1"/>
</dbReference>
<dbReference type="FunFam" id="3.80.30.20:FF:000001">
    <property type="entry name" value="tRNA-2-methylthio-N(6)-dimethylallyladenosine synthase 2"/>
    <property type="match status" value="1"/>
</dbReference>
<dbReference type="Gene3D" id="3.40.50.12160">
    <property type="entry name" value="Methylthiotransferase, N-terminal domain"/>
    <property type="match status" value="1"/>
</dbReference>
<dbReference type="Gene3D" id="2.40.50.140">
    <property type="entry name" value="Nucleic acid-binding proteins"/>
    <property type="match status" value="1"/>
</dbReference>
<dbReference type="Gene3D" id="3.80.30.20">
    <property type="entry name" value="tm_1862 like domain"/>
    <property type="match status" value="1"/>
</dbReference>
<dbReference type="HAMAP" id="MF_01865">
    <property type="entry name" value="MTTase_RimO"/>
    <property type="match status" value="1"/>
</dbReference>
<dbReference type="InterPro" id="IPR006638">
    <property type="entry name" value="Elp3/MiaA/NifB-like_rSAM"/>
</dbReference>
<dbReference type="InterPro" id="IPR005839">
    <property type="entry name" value="Methylthiotransferase"/>
</dbReference>
<dbReference type="InterPro" id="IPR020612">
    <property type="entry name" value="Methylthiotransferase_CS"/>
</dbReference>
<dbReference type="InterPro" id="IPR013848">
    <property type="entry name" value="Methylthiotransferase_N"/>
</dbReference>
<dbReference type="InterPro" id="IPR038135">
    <property type="entry name" value="Methylthiotransferase_N_sf"/>
</dbReference>
<dbReference type="InterPro" id="IPR012340">
    <property type="entry name" value="NA-bd_OB-fold"/>
</dbReference>
<dbReference type="InterPro" id="IPR005840">
    <property type="entry name" value="Ribosomal_uS12_MeSTrfase_RimO"/>
</dbReference>
<dbReference type="InterPro" id="IPR007197">
    <property type="entry name" value="rSAM"/>
</dbReference>
<dbReference type="InterPro" id="IPR023404">
    <property type="entry name" value="rSAM_horseshoe"/>
</dbReference>
<dbReference type="InterPro" id="IPR002792">
    <property type="entry name" value="TRAM_dom"/>
</dbReference>
<dbReference type="NCBIfam" id="TIGR01125">
    <property type="entry name" value="30S ribosomal protein S12 methylthiotransferase RimO"/>
    <property type="match status" value="1"/>
</dbReference>
<dbReference type="NCBIfam" id="TIGR00089">
    <property type="entry name" value="MiaB/RimO family radical SAM methylthiotransferase"/>
    <property type="match status" value="1"/>
</dbReference>
<dbReference type="PANTHER" id="PTHR43837">
    <property type="entry name" value="RIBOSOMAL PROTEIN S12 METHYLTHIOTRANSFERASE RIMO"/>
    <property type="match status" value="1"/>
</dbReference>
<dbReference type="PANTHER" id="PTHR43837:SF1">
    <property type="entry name" value="RIBOSOMAL PROTEIN US12 METHYLTHIOTRANSFERASE RIMO"/>
    <property type="match status" value="1"/>
</dbReference>
<dbReference type="Pfam" id="PF04055">
    <property type="entry name" value="Radical_SAM"/>
    <property type="match status" value="1"/>
</dbReference>
<dbReference type="Pfam" id="PF18693">
    <property type="entry name" value="TRAM_2"/>
    <property type="match status" value="1"/>
</dbReference>
<dbReference type="Pfam" id="PF00919">
    <property type="entry name" value="UPF0004"/>
    <property type="match status" value="1"/>
</dbReference>
<dbReference type="SFLD" id="SFLDG01082">
    <property type="entry name" value="B12-binding_domain_containing"/>
    <property type="match status" value="1"/>
</dbReference>
<dbReference type="SFLD" id="SFLDG01061">
    <property type="entry name" value="methylthiotransferase"/>
    <property type="match status" value="1"/>
</dbReference>
<dbReference type="SFLD" id="SFLDF00274">
    <property type="entry name" value="ribosomal_protein_S12_methylth"/>
    <property type="match status" value="1"/>
</dbReference>
<dbReference type="SMART" id="SM00729">
    <property type="entry name" value="Elp3"/>
    <property type="match status" value="1"/>
</dbReference>
<dbReference type="SUPFAM" id="SSF102114">
    <property type="entry name" value="Radical SAM enzymes"/>
    <property type="match status" value="1"/>
</dbReference>
<dbReference type="PROSITE" id="PS51449">
    <property type="entry name" value="MTTASE_N"/>
    <property type="match status" value="1"/>
</dbReference>
<dbReference type="PROSITE" id="PS01278">
    <property type="entry name" value="MTTASE_RADICAL"/>
    <property type="match status" value="1"/>
</dbReference>
<dbReference type="PROSITE" id="PS51918">
    <property type="entry name" value="RADICAL_SAM"/>
    <property type="match status" value="1"/>
</dbReference>
<dbReference type="PROSITE" id="PS50926">
    <property type="entry name" value="TRAM"/>
    <property type="match status" value="1"/>
</dbReference>
<proteinExistence type="inferred from homology"/>
<sequence>MKKKVGIISLGCPKNLVDSEIMLGLLKKNDFEITSDSEEANVIIVNTCGFIESAKEESINTILEMANYKNKNCEMLIVAGCLAQRYKDEIIKEMPEVDAVVGVSGYDEIAKVIEEFYSKKNDKNDKEKAVFHKDTLSVEYLNNERLLSTNSGYAYLKISEGCDNRCTYCAIPYIRGPYRSRKMEDIISEAEFLAGKGVKEVILVAQDVTVYGKDLYGQKKLVELVREVSGIEGIEWIRLLYTYPEEIDEELIKEIANNEKVVKYLDIPIQHASDKILKLMGRRSTSEGIRNILDRLRAEVPDIVLRTSLIVGFPGEDEKDFKILYDFVRKYEFDRLGVFTYSREEGTPAYDLKPQIKKSVKESRRNDIMQLQKEIVQRKNESRLEKVYKTLVEGVSEDGIFYYGRTYAEAPDIDGSVYFTSAEPLKFGEFVNVKVLNIDDYDLIGEVINESSK</sequence>
<reference key="1">
    <citation type="submission" date="2007-02" db="EMBL/GenBank/DDBJ databases">
        <title>Complete sequence of Clostridium thermocellum ATCC 27405.</title>
        <authorList>
            <consortium name="US DOE Joint Genome Institute"/>
            <person name="Copeland A."/>
            <person name="Lucas S."/>
            <person name="Lapidus A."/>
            <person name="Barry K."/>
            <person name="Detter J.C."/>
            <person name="Glavina del Rio T."/>
            <person name="Hammon N."/>
            <person name="Israni S."/>
            <person name="Dalin E."/>
            <person name="Tice H."/>
            <person name="Pitluck S."/>
            <person name="Chertkov O."/>
            <person name="Brettin T."/>
            <person name="Bruce D."/>
            <person name="Han C."/>
            <person name="Tapia R."/>
            <person name="Gilna P."/>
            <person name="Schmutz J."/>
            <person name="Larimer F."/>
            <person name="Land M."/>
            <person name="Hauser L."/>
            <person name="Kyrpides N."/>
            <person name="Mikhailova N."/>
            <person name="Wu J.H.D."/>
            <person name="Newcomb M."/>
            <person name="Richardson P."/>
        </authorList>
    </citation>
    <scope>NUCLEOTIDE SEQUENCE [LARGE SCALE GENOMIC DNA]</scope>
    <source>
        <strain>ATCC 27405 / DSM 1237 / JCM 9322 / NBRC 103400 / NCIMB 10682 / NRRL B-4536 / VPI 7372</strain>
    </source>
</reference>
<keyword id="KW-0004">4Fe-4S</keyword>
<keyword id="KW-0963">Cytoplasm</keyword>
<keyword id="KW-0408">Iron</keyword>
<keyword id="KW-0411">Iron-sulfur</keyword>
<keyword id="KW-0479">Metal-binding</keyword>
<keyword id="KW-1185">Reference proteome</keyword>
<keyword id="KW-0949">S-adenosyl-L-methionine</keyword>
<keyword id="KW-0808">Transferase</keyword>
<name>RIMO_ACET2</name>
<accession>A3DDZ7</accession>
<comment type="function">
    <text evidence="1">Catalyzes the methylthiolation of an aspartic acid residue of ribosomal protein uS12.</text>
</comment>
<comment type="catalytic activity">
    <reaction evidence="1">
        <text>L-aspartate(89)-[ribosomal protein uS12]-hydrogen + (sulfur carrier)-SH + AH2 + 2 S-adenosyl-L-methionine = 3-methylsulfanyl-L-aspartate(89)-[ribosomal protein uS12]-hydrogen + (sulfur carrier)-H + 5'-deoxyadenosine + L-methionine + A + S-adenosyl-L-homocysteine + 2 H(+)</text>
        <dbReference type="Rhea" id="RHEA:37087"/>
        <dbReference type="Rhea" id="RHEA-COMP:10460"/>
        <dbReference type="Rhea" id="RHEA-COMP:10461"/>
        <dbReference type="Rhea" id="RHEA-COMP:14737"/>
        <dbReference type="Rhea" id="RHEA-COMP:14739"/>
        <dbReference type="ChEBI" id="CHEBI:13193"/>
        <dbReference type="ChEBI" id="CHEBI:15378"/>
        <dbReference type="ChEBI" id="CHEBI:17319"/>
        <dbReference type="ChEBI" id="CHEBI:17499"/>
        <dbReference type="ChEBI" id="CHEBI:29917"/>
        <dbReference type="ChEBI" id="CHEBI:29961"/>
        <dbReference type="ChEBI" id="CHEBI:57844"/>
        <dbReference type="ChEBI" id="CHEBI:57856"/>
        <dbReference type="ChEBI" id="CHEBI:59789"/>
        <dbReference type="ChEBI" id="CHEBI:64428"/>
        <dbReference type="ChEBI" id="CHEBI:73599"/>
        <dbReference type="EC" id="2.8.4.4"/>
    </reaction>
</comment>
<comment type="cofactor">
    <cofactor evidence="1">
        <name>[4Fe-4S] cluster</name>
        <dbReference type="ChEBI" id="CHEBI:49883"/>
    </cofactor>
    <text evidence="1">Binds 2 [4Fe-4S] clusters. One cluster is coordinated with 3 cysteines and an exchangeable S-adenosyl-L-methionine.</text>
</comment>
<comment type="subcellular location">
    <subcellularLocation>
        <location evidence="1">Cytoplasm</location>
    </subcellularLocation>
</comment>
<comment type="similarity">
    <text evidence="1">Belongs to the methylthiotransferase family. RimO subfamily.</text>
</comment>
<protein>
    <recommendedName>
        <fullName evidence="1">Ribosomal protein uS12 methylthiotransferase RimO</fullName>
        <shortName evidence="1">uS12 MTTase</shortName>
        <shortName evidence="1">uS12 methylthiotransferase</shortName>
        <ecNumber evidence="1">2.8.4.4</ecNumber>
    </recommendedName>
    <alternativeName>
        <fullName evidence="1">Ribosomal protein uS12 (aspartate-C(3))-methylthiotransferase</fullName>
    </alternativeName>
    <alternativeName>
        <fullName evidence="1">Ribosome maturation factor RimO</fullName>
    </alternativeName>
</protein>